<comment type="function">
    <text evidence="1">Catalyzes the ATP-dependent phosphorylation of N-acetyl-L-glutamate.</text>
</comment>
<comment type="catalytic activity">
    <reaction evidence="1">
        <text>N-acetyl-L-glutamate + ATP = N-acetyl-L-glutamyl 5-phosphate + ADP</text>
        <dbReference type="Rhea" id="RHEA:14629"/>
        <dbReference type="ChEBI" id="CHEBI:30616"/>
        <dbReference type="ChEBI" id="CHEBI:44337"/>
        <dbReference type="ChEBI" id="CHEBI:57936"/>
        <dbReference type="ChEBI" id="CHEBI:456216"/>
        <dbReference type="EC" id="2.7.2.8"/>
    </reaction>
</comment>
<comment type="pathway">
    <text evidence="1">Amino-acid biosynthesis; L-arginine biosynthesis; N(2)-acetyl-L-ornithine from L-glutamate: step 2/4.</text>
</comment>
<comment type="subunit">
    <text evidence="1">Homodimer.</text>
</comment>
<comment type="subcellular location">
    <subcellularLocation>
        <location evidence="1">Cytoplasm</location>
    </subcellularLocation>
</comment>
<comment type="similarity">
    <text evidence="1">Belongs to the acetylglutamate kinase family. ArgB subfamily.</text>
</comment>
<dbReference type="EC" id="2.7.2.8" evidence="1"/>
<dbReference type="EMBL" id="CP000880">
    <property type="protein sequence ID" value="ABX23357.1"/>
    <property type="molecule type" value="Genomic_DNA"/>
</dbReference>
<dbReference type="SMR" id="A9MI11"/>
<dbReference type="STRING" id="41514.SARI_03542"/>
<dbReference type="KEGG" id="ses:SARI_03542"/>
<dbReference type="HOGENOM" id="CLU_053680_1_1_6"/>
<dbReference type="UniPathway" id="UPA00068">
    <property type="reaction ID" value="UER00107"/>
</dbReference>
<dbReference type="Proteomes" id="UP000002084">
    <property type="component" value="Chromosome"/>
</dbReference>
<dbReference type="GO" id="GO:0005737">
    <property type="term" value="C:cytoplasm"/>
    <property type="evidence" value="ECO:0007669"/>
    <property type="project" value="UniProtKB-SubCell"/>
</dbReference>
<dbReference type="GO" id="GO:0003991">
    <property type="term" value="F:acetylglutamate kinase activity"/>
    <property type="evidence" value="ECO:0007669"/>
    <property type="project" value="UniProtKB-UniRule"/>
</dbReference>
<dbReference type="GO" id="GO:0005524">
    <property type="term" value="F:ATP binding"/>
    <property type="evidence" value="ECO:0007669"/>
    <property type="project" value="UniProtKB-UniRule"/>
</dbReference>
<dbReference type="GO" id="GO:0042450">
    <property type="term" value="P:arginine biosynthetic process via ornithine"/>
    <property type="evidence" value="ECO:0007669"/>
    <property type="project" value="UniProtKB-UniRule"/>
</dbReference>
<dbReference type="GO" id="GO:0006526">
    <property type="term" value="P:L-arginine biosynthetic process"/>
    <property type="evidence" value="ECO:0007669"/>
    <property type="project" value="UniProtKB-UniPathway"/>
</dbReference>
<dbReference type="CDD" id="cd04249">
    <property type="entry name" value="AAK_NAGK-NC"/>
    <property type="match status" value="1"/>
</dbReference>
<dbReference type="FunFam" id="3.40.1160.10:FF:000008">
    <property type="entry name" value="Acetylglutamate kinase"/>
    <property type="match status" value="1"/>
</dbReference>
<dbReference type="Gene3D" id="3.40.1160.10">
    <property type="entry name" value="Acetylglutamate kinase-like"/>
    <property type="match status" value="1"/>
</dbReference>
<dbReference type="HAMAP" id="MF_00082">
    <property type="entry name" value="ArgB"/>
    <property type="match status" value="1"/>
</dbReference>
<dbReference type="InterPro" id="IPR036393">
    <property type="entry name" value="AceGlu_kinase-like_sf"/>
</dbReference>
<dbReference type="InterPro" id="IPR004662">
    <property type="entry name" value="AcgluKinase_fam"/>
</dbReference>
<dbReference type="InterPro" id="IPR037528">
    <property type="entry name" value="ArgB"/>
</dbReference>
<dbReference type="InterPro" id="IPR001048">
    <property type="entry name" value="Asp/Glu/Uridylate_kinase"/>
</dbReference>
<dbReference type="InterPro" id="IPR041731">
    <property type="entry name" value="NAGK-NC"/>
</dbReference>
<dbReference type="NCBIfam" id="TIGR00761">
    <property type="entry name" value="argB"/>
    <property type="match status" value="1"/>
</dbReference>
<dbReference type="PANTHER" id="PTHR23342">
    <property type="entry name" value="N-ACETYLGLUTAMATE SYNTHASE"/>
    <property type="match status" value="1"/>
</dbReference>
<dbReference type="PANTHER" id="PTHR23342:SF0">
    <property type="entry name" value="N-ACETYLGLUTAMATE SYNTHASE, MITOCHONDRIAL"/>
    <property type="match status" value="1"/>
</dbReference>
<dbReference type="Pfam" id="PF00696">
    <property type="entry name" value="AA_kinase"/>
    <property type="match status" value="1"/>
</dbReference>
<dbReference type="PIRSF" id="PIRSF000728">
    <property type="entry name" value="NAGK"/>
    <property type="match status" value="1"/>
</dbReference>
<dbReference type="SUPFAM" id="SSF53633">
    <property type="entry name" value="Carbamate kinase-like"/>
    <property type="match status" value="1"/>
</dbReference>
<accession>A9MI11</accession>
<sequence length="258" mass="27041">MMNPLIIKLGGVLLDNEEALERLFTALVNYRESHQRPLVIVHGGGCVVDELMKGLNLPVKKKNGLRVTPADQIGIIAGALAGTANKTLLAWAKKHHIASVGLFLGDGDSVKVIQLDEALGHVGLAQPGSPKLINTLLENDFLPVVSSIGVTEDGQLMNVNADQAATALAATLGADLILLSDVSGILDGKGQRIAEMTAAKAEQLIDQGIITDGMIVKVNAALDAARALGRPVDIASWRHADQLPALFNGTPIGTRILA</sequence>
<name>ARGB_SALAR</name>
<organism>
    <name type="scientific">Salmonella arizonae (strain ATCC BAA-731 / CDC346-86 / RSK2980)</name>
    <dbReference type="NCBI Taxonomy" id="41514"/>
    <lineage>
        <taxon>Bacteria</taxon>
        <taxon>Pseudomonadati</taxon>
        <taxon>Pseudomonadota</taxon>
        <taxon>Gammaproteobacteria</taxon>
        <taxon>Enterobacterales</taxon>
        <taxon>Enterobacteriaceae</taxon>
        <taxon>Salmonella</taxon>
    </lineage>
</organism>
<evidence type="ECO:0000255" key="1">
    <source>
        <dbReference type="HAMAP-Rule" id="MF_00082"/>
    </source>
</evidence>
<proteinExistence type="inferred from homology"/>
<feature type="chain" id="PRO_1000075319" description="Acetylglutamate kinase">
    <location>
        <begin position="1"/>
        <end position="258"/>
    </location>
</feature>
<feature type="binding site" evidence="1">
    <location>
        <begin position="44"/>
        <end position="45"/>
    </location>
    <ligand>
        <name>substrate</name>
    </ligand>
</feature>
<feature type="binding site" evidence="1">
    <location>
        <position position="66"/>
    </location>
    <ligand>
        <name>substrate</name>
    </ligand>
</feature>
<feature type="binding site" evidence="1">
    <location>
        <position position="158"/>
    </location>
    <ligand>
        <name>substrate</name>
    </ligand>
</feature>
<feature type="binding site" evidence="1">
    <location>
        <begin position="181"/>
        <end position="186"/>
    </location>
    <ligand>
        <name>ATP</name>
        <dbReference type="ChEBI" id="CHEBI:30616"/>
    </ligand>
</feature>
<feature type="binding site" evidence="1">
    <location>
        <begin position="209"/>
        <end position="211"/>
    </location>
    <ligand>
        <name>ATP</name>
        <dbReference type="ChEBI" id="CHEBI:30616"/>
    </ligand>
</feature>
<feature type="site" description="Transition state stabilizer" evidence="1">
    <location>
        <position position="8"/>
    </location>
</feature>
<feature type="site" description="Transition state stabilizer" evidence="1">
    <location>
        <position position="217"/>
    </location>
</feature>
<keyword id="KW-0028">Amino-acid biosynthesis</keyword>
<keyword id="KW-0055">Arginine biosynthesis</keyword>
<keyword id="KW-0067">ATP-binding</keyword>
<keyword id="KW-0963">Cytoplasm</keyword>
<keyword id="KW-0418">Kinase</keyword>
<keyword id="KW-0547">Nucleotide-binding</keyword>
<keyword id="KW-1185">Reference proteome</keyword>
<keyword id="KW-0808">Transferase</keyword>
<protein>
    <recommendedName>
        <fullName evidence="1">Acetylglutamate kinase</fullName>
        <ecNumber evidence="1">2.7.2.8</ecNumber>
    </recommendedName>
    <alternativeName>
        <fullName evidence="1">N-acetyl-L-glutamate 5-phosphotransferase</fullName>
    </alternativeName>
    <alternativeName>
        <fullName evidence="1">NAG kinase</fullName>
        <shortName evidence="1">NAGK</shortName>
    </alternativeName>
</protein>
<reference key="1">
    <citation type="submission" date="2007-11" db="EMBL/GenBank/DDBJ databases">
        <authorList>
            <consortium name="The Salmonella enterica serovar Arizonae Genome Sequencing Project"/>
            <person name="McClelland M."/>
            <person name="Sanderson E.K."/>
            <person name="Porwollik S."/>
            <person name="Spieth J."/>
            <person name="Clifton W.S."/>
            <person name="Fulton R."/>
            <person name="Chunyan W."/>
            <person name="Wollam A."/>
            <person name="Shah N."/>
            <person name="Pepin K."/>
            <person name="Bhonagiri V."/>
            <person name="Nash W."/>
            <person name="Johnson M."/>
            <person name="Thiruvilangam P."/>
            <person name="Wilson R."/>
        </authorList>
    </citation>
    <scope>NUCLEOTIDE SEQUENCE [LARGE SCALE GENOMIC DNA]</scope>
    <source>
        <strain>ATCC BAA-731 / CDC346-86 / RSK2980</strain>
    </source>
</reference>
<gene>
    <name evidence="1" type="primary">argB</name>
    <name type="ordered locus">SARI_03542</name>
</gene>